<dbReference type="EC" id="3.4.21.88" evidence="1"/>
<dbReference type="EMBL" id="CP001219">
    <property type="protein sequence ID" value="ACK78330.1"/>
    <property type="molecule type" value="Genomic_DNA"/>
</dbReference>
<dbReference type="RefSeq" id="WP_009568876.1">
    <property type="nucleotide sequence ID" value="NC_011761.1"/>
</dbReference>
<dbReference type="SMR" id="B7JBX0"/>
<dbReference type="STRING" id="243159.AFE_1868"/>
<dbReference type="MEROPS" id="S24.001"/>
<dbReference type="PaxDb" id="243159-AFE_1868"/>
<dbReference type="GeneID" id="65281024"/>
<dbReference type="KEGG" id="afr:AFE_1868"/>
<dbReference type="eggNOG" id="COG1974">
    <property type="taxonomic scope" value="Bacteria"/>
</dbReference>
<dbReference type="HOGENOM" id="CLU_066192_45_3_6"/>
<dbReference type="Proteomes" id="UP000001362">
    <property type="component" value="Chromosome"/>
</dbReference>
<dbReference type="GO" id="GO:0003677">
    <property type="term" value="F:DNA binding"/>
    <property type="evidence" value="ECO:0007669"/>
    <property type="project" value="UniProtKB-UniRule"/>
</dbReference>
<dbReference type="GO" id="GO:0004252">
    <property type="term" value="F:serine-type endopeptidase activity"/>
    <property type="evidence" value="ECO:0007669"/>
    <property type="project" value="UniProtKB-UniRule"/>
</dbReference>
<dbReference type="GO" id="GO:0006281">
    <property type="term" value="P:DNA repair"/>
    <property type="evidence" value="ECO:0007669"/>
    <property type="project" value="UniProtKB-UniRule"/>
</dbReference>
<dbReference type="GO" id="GO:0006260">
    <property type="term" value="P:DNA replication"/>
    <property type="evidence" value="ECO:0007669"/>
    <property type="project" value="UniProtKB-UniRule"/>
</dbReference>
<dbReference type="GO" id="GO:0045892">
    <property type="term" value="P:negative regulation of DNA-templated transcription"/>
    <property type="evidence" value="ECO:0007669"/>
    <property type="project" value="UniProtKB-UniRule"/>
</dbReference>
<dbReference type="GO" id="GO:0006508">
    <property type="term" value="P:proteolysis"/>
    <property type="evidence" value="ECO:0007669"/>
    <property type="project" value="InterPro"/>
</dbReference>
<dbReference type="GO" id="GO:0009432">
    <property type="term" value="P:SOS response"/>
    <property type="evidence" value="ECO:0007669"/>
    <property type="project" value="UniProtKB-UniRule"/>
</dbReference>
<dbReference type="CDD" id="cd06529">
    <property type="entry name" value="S24_LexA-like"/>
    <property type="match status" value="1"/>
</dbReference>
<dbReference type="FunFam" id="1.10.10.10:FF:000009">
    <property type="entry name" value="LexA repressor"/>
    <property type="match status" value="1"/>
</dbReference>
<dbReference type="FunFam" id="2.10.109.10:FF:000001">
    <property type="entry name" value="LexA repressor"/>
    <property type="match status" value="1"/>
</dbReference>
<dbReference type="Gene3D" id="2.10.109.10">
    <property type="entry name" value="Umud Fragment, subunit A"/>
    <property type="match status" value="1"/>
</dbReference>
<dbReference type="Gene3D" id="1.10.10.10">
    <property type="entry name" value="Winged helix-like DNA-binding domain superfamily/Winged helix DNA-binding domain"/>
    <property type="match status" value="1"/>
</dbReference>
<dbReference type="HAMAP" id="MF_00015">
    <property type="entry name" value="LexA"/>
    <property type="match status" value="1"/>
</dbReference>
<dbReference type="InterPro" id="IPR006200">
    <property type="entry name" value="LexA"/>
</dbReference>
<dbReference type="InterPro" id="IPR039418">
    <property type="entry name" value="LexA-like"/>
</dbReference>
<dbReference type="InterPro" id="IPR036286">
    <property type="entry name" value="LexA/Signal_pep-like_sf"/>
</dbReference>
<dbReference type="InterPro" id="IPR006199">
    <property type="entry name" value="LexA_DNA-bd_dom"/>
</dbReference>
<dbReference type="InterPro" id="IPR050077">
    <property type="entry name" value="LexA_repressor"/>
</dbReference>
<dbReference type="InterPro" id="IPR006197">
    <property type="entry name" value="Peptidase_S24_LexA"/>
</dbReference>
<dbReference type="InterPro" id="IPR015927">
    <property type="entry name" value="Peptidase_S24_S26A/B/C"/>
</dbReference>
<dbReference type="InterPro" id="IPR036388">
    <property type="entry name" value="WH-like_DNA-bd_sf"/>
</dbReference>
<dbReference type="InterPro" id="IPR036390">
    <property type="entry name" value="WH_DNA-bd_sf"/>
</dbReference>
<dbReference type="NCBIfam" id="TIGR00498">
    <property type="entry name" value="lexA"/>
    <property type="match status" value="1"/>
</dbReference>
<dbReference type="PANTHER" id="PTHR33516">
    <property type="entry name" value="LEXA REPRESSOR"/>
    <property type="match status" value="1"/>
</dbReference>
<dbReference type="PANTHER" id="PTHR33516:SF2">
    <property type="entry name" value="LEXA REPRESSOR-RELATED"/>
    <property type="match status" value="1"/>
</dbReference>
<dbReference type="Pfam" id="PF01726">
    <property type="entry name" value="LexA_DNA_bind"/>
    <property type="match status" value="1"/>
</dbReference>
<dbReference type="Pfam" id="PF00717">
    <property type="entry name" value="Peptidase_S24"/>
    <property type="match status" value="1"/>
</dbReference>
<dbReference type="PRINTS" id="PR00726">
    <property type="entry name" value="LEXASERPTASE"/>
</dbReference>
<dbReference type="SUPFAM" id="SSF51306">
    <property type="entry name" value="LexA/Signal peptidase"/>
    <property type="match status" value="1"/>
</dbReference>
<dbReference type="SUPFAM" id="SSF46785">
    <property type="entry name" value="Winged helix' DNA-binding domain"/>
    <property type="match status" value="1"/>
</dbReference>
<proteinExistence type="inferred from homology"/>
<reference key="1">
    <citation type="journal article" date="2008" name="BMC Genomics">
        <title>Acidithiobacillus ferrooxidans metabolism: from genome sequence to industrial applications.</title>
        <authorList>
            <person name="Valdes J."/>
            <person name="Pedroso I."/>
            <person name="Quatrini R."/>
            <person name="Dodson R.J."/>
            <person name="Tettelin H."/>
            <person name="Blake R. II"/>
            <person name="Eisen J.A."/>
            <person name="Holmes D.S."/>
        </authorList>
    </citation>
    <scope>NUCLEOTIDE SEQUENCE [LARGE SCALE GENOMIC DNA]</scope>
    <source>
        <strain>ATCC 23270 / DSM 14882 / CIP 104768 / NCIMB 8455</strain>
    </source>
</reference>
<sequence length="205" mass="22626">MDELTPRQSEILAWIRARMAEDSLPPTRAELMRAFDFRSPNAAESHLRVLARKGYILLQSGTARGIRLCASEEETGLPLIGRVAAGQPMLAEEFREGQLPVDPKLFSPGADYLLRVQGMSMRDAGILDGDILAVRHDASLTLQDGQMVVARVNGEVTVKRWKRDGKQVWLLPENPDFSPISVDLQRDSLTIEGVVVGLLRIGGNL</sequence>
<organism>
    <name type="scientific">Acidithiobacillus ferrooxidans (strain ATCC 23270 / DSM 14882 / CIP 104768 / NCIMB 8455)</name>
    <name type="common">Ferrobacillus ferrooxidans (strain ATCC 23270)</name>
    <dbReference type="NCBI Taxonomy" id="243159"/>
    <lineage>
        <taxon>Bacteria</taxon>
        <taxon>Pseudomonadati</taxon>
        <taxon>Pseudomonadota</taxon>
        <taxon>Acidithiobacillia</taxon>
        <taxon>Acidithiobacillales</taxon>
        <taxon>Acidithiobacillaceae</taxon>
        <taxon>Acidithiobacillus</taxon>
    </lineage>
</organism>
<evidence type="ECO:0000255" key="1">
    <source>
        <dbReference type="HAMAP-Rule" id="MF_00015"/>
    </source>
</evidence>
<protein>
    <recommendedName>
        <fullName evidence="1">LexA repressor</fullName>
        <ecNumber evidence="1">3.4.21.88</ecNumber>
    </recommendedName>
</protein>
<keyword id="KW-0068">Autocatalytic cleavage</keyword>
<keyword id="KW-0227">DNA damage</keyword>
<keyword id="KW-0234">DNA repair</keyword>
<keyword id="KW-0235">DNA replication</keyword>
<keyword id="KW-0238">DNA-binding</keyword>
<keyword id="KW-0378">Hydrolase</keyword>
<keyword id="KW-1185">Reference proteome</keyword>
<keyword id="KW-0678">Repressor</keyword>
<keyword id="KW-0742">SOS response</keyword>
<keyword id="KW-0804">Transcription</keyword>
<keyword id="KW-0805">Transcription regulation</keyword>
<comment type="function">
    <text evidence="1">Represses a number of genes involved in the response to DNA damage (SOS response), including recA and lexA. In the presence of single-stranded DNA, RecA interacts with LexA causing an autocatalytic cleavage which disrupts the DNA-binding part of LexA, leading to derepression of the SOS regulon and eventually DNA repair.</text>
</comment>
<comment type="catalytic activity">
    <reaction evidence="1">
        <text>Hydrolysis of Ala-|-Gly bond in repressor LexA.</text>
        <dbReference type="EC" id="3.4.21.88"/>
    </reaction>
</comment>
<comment type="subunit">
    <text evidence="1">Homodimer.</text>
</comment>
<comment type="similarity">
    <text evidence="1">Belongs to the peptidase S24 family.</text>
</comment>
<name>LEXA_ACIF2</name>
<feature type="chain" id="PRO_1000192763" description="LexA repressor">
    <location>
        <begin position="1"/>
        <end position="205"/>
    </location>
</feature>
<feature type="DNA-binding region" description="H-T-H motif" evidence="1">
    <location>
        <begin position="28"/>
        <end position="48"/>
    </location>
</feature>
<feature type="active site" description="For autocatalytic cleavage activity" evidence="1">
    <location>
        <position position="120"/>
    </location>
</feature>
<feature type="active site" description="For autocatalytic cleavage activity" evidence="1">
    <location>
        <position position="159"/>
    </location>
</feature>
<feature type="site" description="Cleavage; by autolysis" evidence="1">
    <location>
        <begin position="85"/>
        <end position="86"/>
    </location>
</feature>
<accession>B7JBX0</accession>
<gene>
    <name evidence="1" type="primary">lexA</name>
    <name type="ordered locus">AFE_1868</name>
</gene>